<comment type="function">
    <text evidence="1">Required for rescue of stalled ribosomes mediated by trans-translation. Binds to transfer-messenger RNA (tmRNA), required for stable association of tmRNA with ribosomes. tmRNA and SmpB together mimic tRNA shape, replacing the anticodon stem-loop with SmpB. tmRNA is encoded by the ssrA gene; the 2 termini fold to resemble tRNA(Ala) and it encodes a 'tag peptide', a short internal open reading frame. During trans-translation Ala-aminoacylated tmRNA acts like a tRNA, entering the A-site of stalled ribosomes, displacing the stalled mRNA. The ribosome then switches to translate the ORF on the tmRNA; the nascent peptide is terminated with the 'tag peptide' encoded by the tmRNA and targeted for degradation. The ribosome is freed to recommence translation, which seems to be the essential function of trans-translation.</text>
</comment>
<comment type="subcellular location">
    <subcellularLocation>
        <location evidence="1">Cytoplasm</location>
    </subcellularLocation>
    <text evidence="1">The tmRNA-SmpB complex associates with stalled 70S ribosomes.</text>
</comment>
<comment type="similarity">
    <text evidence="1">Belongs to the SmpB family.</text>
</comment>
<reference key="1">
    <citation type="journal article" date="2004" name="J. Infect. Dis.">
        <title>Progress toward characterization of the group A Streptococcus metagenome: complete genome sequence of a macrolide-resistant serotype M6 strain.</title>
        <authorList>
            <person name="Banks D.J."/>
            <person name="Porcella S.F."/>
            <person name="Barbian K.D."/>
            <person name="Beres S.B."/>
            <person name="Philips L.E."/>
            <person name="Voyich J.M."/>
            <person name="DeLeo F.R."/>
            <person name="Martin J.M."/>
            <person name="Somerville G.A."/>
            <person name="Musser J.M."/>
        </authorList>
    </citation>
    <scope>NUCLEOTIDE SEQUENCE [LARGE SCALE GENOMIC DNA]</scope>
    <source>
        <strain>ATCC BAA-946 / MGAS10394</strain>
    </source>
</reference>
<keyword id="KW-0963">Cytoplasm</keyword>
<keyword id="KW-0694">RNA-binding</keyword>
<feature type="chain" id="PRO_0000103045" description="SsrA-binding protein">
    <location>
        <begin position="1"/>
        <end position="155"/>
    </location>
</feature>
<feature type="region of interest" description="Disordered" evidence="2">
    <location>
        <begin position="135"/>
        <end position="155"/>
    </location>
</feature>
<feature type="compositionally biased region" description="Basic and acidic residues" evidence="2">
    <location>
        <begin position="135"/>
        <end position="147"/>
    </location>
</feature>
<accession>Q5XDD6</accession>
<protein>
    <recommendedName>
        <fullName evidence="1">SsrA-binding protein</fullName>
    </recommendedName>
    <alternativeName>
        <fullName evidence="1">Small protein B</fullName>
    </alternativeName>
</protein>
<gene>
    <name evidence="1" type="primary">smpB</name>
    <name type="ordered locus">M6_Spy0442</name>
</gene>
<sequence>MAKGEGHILAQNKKARHDYHIVETVEAGIVLTGTEIKSVRAARIQLKDGFAQIKNGEAWLVNVHIAPFEQGNIWNADPERTRKLLLKKREITHLANELKGSGMTLVPLKVYLKDGFAKVLIGLAKGKHEYDKRETIKRRDQERDIKKQMKHYNAR</sequence>
<dbReference type="EMBL" id="CP000003">
    <property type="protein sequence ID" value="AAT86577.1"/>
    <property type="molecule type" value="Genomic_DNA"/>
</dbReference>
<dbReference type="RefSeq" id="WP_002994152.1">
    <property type="nucleotide sequence ID" value="NC_006086.1"/>
</dbReference>
<dbReference type="SMR" id="Q5XDD6"/>
<dbReference type="GeneID" id="69901269"/>
<dbReference type="KEGG" id="spa:M6_Spy0442"/>
<dbReference type="HOGENOM" id="CLU_108953_0_0_9"/>
<dbReference type="Proteomes" id="UP000001167">
    <property type="component" value="Chromosome"/>
</dbReference>
<dbReference type="GO" id="GO:0005829">
    <property type="term" value="C:cytosol"/>
    <property type="evidence" value="ECO:0007669"/>
    <property type="project" value="TreeGrafter"/>
</dbReference>
<dbReference type="GO" id="GO:0003723">
    <property type="term" value="F:RNA binding"/>
    <property type="evidence" value="ECO:0007669"/>
    <property type="project" value="UniProtKB-UniRule"/>
</dbReference>
<dbReference type="GO" id="GO:0070929">
    <property type="term" value="P:trans-translation"/>
    <property type="evidence" value="ECO:0007669"/>
    <property type="project" value="UniProtKB-UniRule"/>
</dbReference>
<dbReference type="CDD" id="cd09294">
    <property type="entry name" value="SmpB"/>
    <property type="match status" value="1"/>
</dbReference>
<dbReference type="Gene3D" id="2.40.280.10">
    <property type="match status" value="1"/>
</dbReference>
<dbReference type="HAMAP" id="MF_00023">
    <property type="entry name" value="SmpB"/>
    <property type="match status" value="1"/>
</dbReference>
<dbReference type="InterPro" id="IPR023620">
    <property type="entry name" value="SmpB"/>
</dbReference>
<dbReference type="InterPro" id="IPR000037">
    <property type="entry name" value="SsrA-bd_prot"/>
</dbReference>
<dbReference type="InterPro" id="IPR020081">
    <property type="entry name" value="SsrA-bd_prot_CS"/>
</dbReference>
<dbReference type="NCBIfam" id="NF003843">
    <property type="entry name" value="PRK05422.1"/>
    <property type="match status" value="1"/>
</dbReference>
<dbReference type="NCBIfam" id="TIGR00086">
    <property type="entry name" value="smpB"/>
    <property type="match status" value="1"/>
</dbReference>
<dbReference type="PANTHER" id="PTHR30308:SF2">
    <property type="entry name" value="SSRA-BINDING PROTEIN"/>
    <property type="match status" value="1"/>
</dbReference>
<dbReference type="PANTHER" id="PTHR30308">
    <property type="entry name" value="TMRNA-BINDING COMPONENT OF TRANS-TRANSLATION TAGGING COMPLEX"/>
    <property type="match status" value="1"/>
</dbReference>
<dbReference type="Pfam" id="PF01668">
    <property type="entry name" value="SmpB"/>
    <property type="match status" value="1"/>
</dbReference>
<dbReference type="SUPFAM" id="SSF74982">
    <property type="entry name" value="Small protein B (SmpB)"/>
    <property type="match status" value="1"/>
</dbReference>
<dbReference type="PROSITE" id="PS01317">
    <property type="entry name" value="SSRP"/>
    <property type="match status" value="1"/>
</dbReference>
<proteinExistence type="inferred from homology"/>
<organism>
    <name type="scientific">Streptococcus pyogenes serotype M6 (strain ATCC BAA-946 / MGAS10394)</name>
    <dbReference type="NCBI Taxonomy" id="286636"/>
    <lineage>
        <taxon>Bacteria</taxon>
        <taxon>Bacillati</taxon>
        <taxon>Bacillota</taxon>
        <taxon>Bacilli</taxon>
        <taxon>Lactobacillales</taxon>
        <taxon>Streptococcaceae</taxon>
        <taxon>Streptococcus</taxon>
    </lineage>
</organism>
<evidence type="ECO:0000255" key="1">
    <source>
        <dbReference type="HAMAP-Rule" id="MF_00023"/>
    </source>
</evidence>
<evidence type="ECO:0000256" key="2">
    <source>
        <dbReference type="SAM" id="MobiDB-lite"/>
    </source>
</evidence>
<name>SSRP_STRP6</name>